<keyword id="KW-0143">Chaperone</keyword>
<keyword id="KW-0156">Chromatin regulator</keyword>
<keyword id="KW-0158">Chromosome</keyword>
<keyword id="KW-0903">Direct protein sequencing</keyword>
<keyword id="KW-0539">Nucleus</keyword>
<keyword id="KW-0597">Phosphoprotein</keyword>
<keyword id="KW-1185">Reference proteome</keyword>
<keyword id="KW-0804">Transcription</keyword>
<keyword id="KW-0805">Transcription regulation</keyword>
<feature type="chain" id="PRO_0000284025" description="Histone chaperone asf1">
    <location>
        <begin position="1"/>
        <end position="218"/>
    </location>
</feature>
<feature type="modified residue" description="Phosphoserine" evidence="7">
    <location>
        <position position="211"/>
    </location>
</feature>
<feature type="modified residue" description="Phosphoserine" evidence="7">
    <location>
        <position position="213"/>
    </location>
</feature>
<feature type="mutagenesis site" description="Impairs binding to histone H3 and histone H4 and transcriptional silencing." evidence="3">
    <location>
        <begin position="19"/>
        <end position="26"/>
    </location>
</feature>
<name>ASF1_DROME</name>
<dbReference type="EMBL" id="AF189278">
    <property type="protein sequence ID" value="AAF15354.1"/>
    <property type="molecule type" value="mRNA"/>
</dbReference>
<dbReference type="EMBL" id="AM294236">
    <property type="protein sequence ID" value="CAL26140.1"/>
    <property type="molecule type" value="Genomic_DNA"/>
</dbReference>
<dbReference type="EMBL" id="AM294237">
    <property type="protein sequence ID" value="CAL26141.1"/>
    <property type="molecule type" value="Genomic_DNA"/>
</dbReference>
<dbReference type="EMBL" id="AM294238">
    <property type="protein sequence ID" value="CAL26142.1"/>
    <property type="molecule type" value="Genomic_DNA"/>
</dbReference>
<dbReference type="EMBL" id="AM294239">
    <property type="protein sequence ID" value="CAL26143.1"/>
    <property type="molecule type" value="Genomic_DNA"/>
</dbReference>
<dbReference type="EMBL" id="AM294240">
    <property type="protein sequence ID" value="CAL26144.1"/>
    <property type="molecule type" value="Genomic_DNA"/>
</dbReference>
<dbReference type="EMBL" id="AM294241">
    <property type="protein sequence ID" value="CAL26145.1"/>
    <property type="molecule type" value="Genomic_DNA"/>
</dbReference>
<dbReference type="EMBL" id="AM294242">
    <property type="protein sequence ID" value="CAL26146.1"/>
    <property type="molecule type" value="Genomic_DNA"/>
</dbReference>
<dbReference type="EMBL" id="AM294243">
    <property type="protein sequence ID" value="CAL26147.1"/>
    <property type="molecule type" value="Genomic_DNA"/>
</dbReference>
<dbReference type="EMBL" id="AM294244">
    <property type="protein sequence ID" value="CAL26148.1"/>
    <property type="molecule type" value="Genomic_DNA"/>
</dbReference>
<dbReference type="EMBL" id="AM294245">
    <property type="protein sequence ID" value="CAL26149.1"/>
    <property type="molecule type" value="Genomic_DNA"/>
</dbReference>
<dbReference type="EMBL" id="AM294246">
    <property type="protein sequence ID" value="CAL26150.1"/>
    <property type="molecule type" value="Genomic_DNA"/>
</dbReference>
<dbReference type="EMBL" id="AE014296">
    <property type="protein sequence ID" value="AAF49131.1"/>
    <property type="molecule type" value="Genomic_DNA"/>
</dbReference>
<dbReference type="EMBL" id="BT004869">
    <property type="protein sequence ID" value="AAO45225.1"/>
    <property type="molecule type" value="mRNA"/>
</dbReference>
<dbReference type="RefSeq" id="NP_001189131.1">
    <property type="nucleotide sequence ID" value="NM_001202202.2"/>
</dbReference>
<dbReference type="RefSeq" id="NP_524163.1">
    <property type="nucleotide sequence ID" value="NM_079439.4"/>
</dbReference>
<dbReference type="SMR" id="Q9V464"/>
<dbReference type="BioGRID" id="65411">
    <property type="interactions" value="30"/>
</dbReference>
<dbReference type="DIP" id="DIP-22309N"/>
<dbReference type="FunCoup" id="Q9V464">
    <property type="interactions" value="1368"/>
</dbReference>
<dbReference type="IntAct" id="Q9V464">
    <property type="interactions" value="17"/>
</dbReference>
<dbReference type="STRING" id="7227.FBpp0074715"/>
<dbReference type="iPTMnet" id="Q9V464"/>
<dbReference type="PaxDb" id="7227-FBpp0074715"/>
<dbReference type="EnsemblMetazoa" id="FBtr0074947">
    <property type="protein sequence ID" value="FBpp0074715"/>
    <property type="gene ID" value="FBgn0029094"/>
</dbReference>
<dbReference type="EnsemblMetazoa" id="FBtr0302381">
    <property type="protein sequence ID" value="FBpp0291576"/>
    <property type="gene ID" value="FBgn0029094"/>
</dbReference>
<dbReference type="GeneID" id="40141"/>
<dbReference type="KEGG" id="dme:Dmel_CG9383"/>
<dbReference type="AGR" id="FB:FBgn0029094"/>
<dbReference type="CTD" id="40141"/>
<dbReference type="FlyBase" id="FBgn0029094">
    <property type="gene designation" value="asf1"/>
</dbReference>
<dbReference type="VEuPathDB" id="VectorBase:FBgn0029094"/>
<dbReference type="eggNOG" id="KOG3265">
    <property type="taxonomic scope" value="Eukaryota"/>
</dbReference>
<dbReference type="GeneTree" id="ENSGT00390000004692"/>
<dbReference type="HOGENOM" id="CLU_060354_1_1_1"/>
<dbReference type="InParanoid" id="Q9V464"/>
<dbReference type="OMA" id="DYADQEM"/>
<dbReference type="OrthoDB" id="29755at2759"/>
<dbReference type="PhylomeDB" id="Q9V464"/>
<dbReference type="SignaLink" id="Q9V464"/>
<dbReference type="BioGRID-ORCS" id="40141">
    <property type="hits" value="0 hits in 3 CRISPR screens"/>
</dbReference>
<dbReference type="ChiTaRS" id="asf1">
    <property type="organism name" value="fly"/>
</dbReference>
<dbReference type="GenomeRNAi" id="40141"/>
<dbReference type="PRO" id="PR:Q9V464"/>
<dbReference type="Proteomes" id="UP000000803">
    <property type="component" value="Chromosome 3L"/>
</dbReference>
<dbReference type="Bgee" id="FBgn0029094">
    <property type="expression patterns" value="Expressed in spermatogonium in testis and 108 other cell types or tissues"/>
</dbReference>
<dbReference type="ExpressionAtlas" id="Q9V464">
    <property type="expression patterns" value="baseline and differential"/>
</dbReference>
<dbReference type="GO" id="GO:0000785">
    <property type="term" value="C:chromatin"/>
    <property type="evidence" value="ECO:0000318"/>
    <property type="project" value="GO_Central"/>
</dbReference>
<dbReference type="GO" id="GO:0005634">
    <property type="term" value="C:nucleus"/>
    <property type="evidence" value="ECO:0000318"/>
    <property type="project" value="GO_Central"/>
</dbReference>
<dbReference type="GO" id="GO:0005700">
    <property type="term" value="C:polytene chromosome"/>
    <property type="evidence" value="ECO:0000314"/>
    <property type="project" value="FlyBase"/>
</dbReference>
<dbReference type="GO" id="GO:0035059">
    <property type="term" value="C:RCAF complex"/>
    <property type="evidence" value="ECO:0000314"/>
    <property type="project" value="UniProtKB"/>
</dbReference>
<dbReference type="GO" id="GO:0017053">
    <property type="term" value="C:transcription repressor complex"/>
    <property type="evidence" value="ECO:0000314"/>
    <property type="project" value="FlyBase"/>
</dbReference>
<dbReference type="GO" id="GO:0042393">
    <property type="term" value="F:histone binding"/>
    <property type="evidence" value="ECO:0000318"/>
    <property type="project" value="GO_Central"/>
</dbReference>
<dbReference type="GO" id="GO:0061629">
    <property type="term" value="F:RNA polymerase II-specific DNA-binding transcription factor binding"/>
    <property type="evidence" value="ECO:0000353"/>
    <property type="project" value="FlyBase"/>
</dbReference>
<dbReference type="GO" id="GO:0006325">
    <property type="term" value="P:chromatin organization"/>
    <property type="evidence" value="ECO:0000314"/>
    <property type="project" value="UniProtKB"/>
</dbReference>
<dbReference type="GO" id="GO:0006335">
    <property type="term" value="P:DNA replication-dependent chromatin assembly"/>
    <property type="evidence" value="ECO:0000315"/>
    <property type="project" value="FlyBase"/>
</dbReference>
<dbReference type="GO" id="GO:0000122">
    <property type="term" value="P:negative regulation of transcription by RNA polymerase II"/>
    <property type="evidence" value="ECO:0000315"/>
    <property type="project" value="FlyBase"/>
</dbReference>
<dbReference type="GO" id="GO:0048024">
    <property type="term" value="P:regulation of mRNA splicing, via spliceosome"/>
    <property type="evidence" value="ECO:0000315"/>
    <property type="project" value="FlyBase"/>
</dbReference>
<dbReference type="FunFam" id="2.60.40.1490:FF:000001">
    <property type="entry name" value="Histone chaperone ASF1"/>
    <property type="match status" value="1"/>
</dbReference>
<dbReference type="Gene3D" id="2.60.40.1490">
    <property type="entry name" value="Histone chaperone ASF1-like"/>
    <property type="match status" value="1"/>
</dbReference>
<dbReference type="InterPro" id="IPR006818">
    <property type="entry name" value="ASF1-like"/>
</dbReference>
<dbReference type="InterPro" id="IPR036747">
    <property type="entry name" value="ASF1-like_sf"/>
</dbReference>
<dbReference type="PANTHER" id="PTHR12040">
    <property type="entry name" value="ANTI-SILENCING PROTEIN 1"/>
    <property type="match status" value="1"/>
</dbReference>
<dbReference type="PANTHER" id="PTHR12040:SF0">
    <property type="entry name" value="HISTONE CHAPERONE ASF1"/>
    <property type="match status" value="1"/>
</dbReference>
<dbReference type="Pfam" id="PF04729">
    <property type="entry name" value="ASF1_hist_chap"/>
    <property type="match status" value="1"/>
</dbReference>
<dbReference type="SUPFAM" id="SSF101546">
    <property type="entry name" value="ASF1-like"/>
    <property type="match status" value="1"/>
</dbReference>
<accession>Q9V464</accession>
<evidence type="ECO:0000269" key="1">
    <source>
    </source>
</evidence>
<evidence type="ECO:0000269" key="2">
    <source>
    </source>
</evidence>
<evidence type="ECO:0000269" key="3">
    <source>
    </source>
</evidence>
<evidence type="ECO:0000269" key="4">
    <source>
    </source>
</evidence>
<evidence type="ECO:0000269" key="5">
    <source>
    </source>
</evidence>
<evidence type="ECO:0000269" key="6">
    <source>
    </source>
</evidence>
<evidence type="ECO:0000269" key="7">
    <source>
    </source>
</evidence>
<evidence type="ECO:0000269" key="8">
    <source>
    </source>
</evidence>
<evidence type="ECO:0000305" key="9"/>
<sequence>MAKVHITNVVVLDNPSSFFNPFQFELTFECIEELKEDLEWKMIYVGSAESEEHDQVLDTIYVGPVPEGRHIFVFQADPPDVSKIPEPDAVGVTIVLLTCSYRGQEFVRVGYYVNNDYADPEMRENPPTKPLFEKLTRNILASKPRVTRFKINWDYGHINGNGNGVENGHQDEMATDGPSTSEAASAVIHPEDDNSLAMPMENGIKALNENSNSLAMEC</sequence>
<reference key="1">
    <citation type="journal article" date="1999" name="Nature">
        <title>The RCAF complex mediates chromatin assembly during DNA replication and repair.</title>
        <authorList>
            <person name="Tyler J.K."/>
            <person name="Adams C.R."/>
            <person name="Chen S.-R."/>
            <person name="Kobayashi R."/>
            <person name="Kamakaka R.T."/>
            <person name="Kadonaga J.T."/>
        </authorList>
    </citation>
    <scope>NUCLEOTIDE SEQUENCE [MRNA]</scope>
    <scope>PROTEIN SEQUENCE OF 42-70; 130-134 AND 144-171</scope>
    <scope>FUNCTION</scope>
    <scope>INTERACTION WITH HISTONE H3 AND HISTONE H4</scope>
    <scope>DEVELOPMENTAL STAGE</scope>
</reference>
<reference key="2">
    <citation type="journal article" date="2006" name="Genetics">
        <title>Widespread adaptive evolution of Drosophila genes with sex-biased expression.</title>
        <authorList>
            <person name="Proeschel M."/>
            <person name="Zhang Z."/>
            <person name="Parsch J."/>
        </authorList>
    </citation>
    <scope>NUCLEOTIDE SEQUENCE [GENOMIC DNA]</scope>
    <source>
        <strain>Zimbabwe</strain>
    </source>
</reference>
<reference key="3">
    <citation type="journal article" date="2000" name="Science">
        <title>The genome sequence of Drosophila melanogaster.</title>
        <authorList>
            <person name="Adams M.D."/>
            <person name="Celniker S.E."/>
            <person name="Holt R.A."/>
            <person name="Evans C.A."/>
            <person name="Gocayne J.D."/>
            <person name="Amanatides P.G."/>
            <person name="Scherer S.E."/>
            <person name="Li P.W."/>
            <person name="Hoskins R.A."/>
            <person name="Galle R.F."/>
            <person name="George R.A."/>
            <person name="Lewis S.E."/>
            <person name="Richards S."/>
            <person name="Ashburner M."/>
            <person name="Henderson S.N."/>
            <person name="Sutton G.G."/>
            <person name="Wortman J.R."/>
            <person name="Yandell M.D."/>
            <person name="Zhang Q."/>
            <person name="Chen L.X."/>
            <person name="Brandon R.C."/>
            <person name="Rogers Y.-H.C."/>
            <person name="Blazej R.G."/>
            <person name="Champe M."/>
            <person name="Pfeiffer B.D."/>
            <person name="Wan K.H."/>
            <person name="Doyle C."/>
            <person name="Baxter E.G."/>
            <person name="Helt G."/>
            <person name="Nelson C.R."/>
            <person name="Miklos G.L.G."/>
            <person name="Abril J.F."/>
            <person name="Agbayani A."/>
            <person name="An H.-J."/>
            <person name="Andrews-Pfannkoch C."/>
            <person name="Baldwin D."/>
            <person name="Ballew R.M."/>
            <person name="Basu A."/>
            <person name="Baxendale J."/>
            <person name="Bayraktaroglu L."/>
            <person name="Beasley E.M."/>
            <person name="Beeson K.Y."/>
            <person name="Benos P.V."/>
            <person name="Berman B.P."/>
            <person name="Bhandari D."/>
            <person name="Bolshakov S."/>
            <person name="Borkova D."/>
            <person name="Botchan M.R."/>
            <person name="Bouck J."/>
            <person name="Brokstein P."/>
            <person name="Brottier P."/>
            <person name="Burtis K.C."/>
            <person name="Busam D.A."/>
            <person name="Butler H."/>
            <person name="Cadieu E."/>
            <person name="Center A."/>
            <person name="Chandra I."/>
            <person name="Cherry J.M."/>
            <person name="Cawley S."/>
            <person name="Dahlke C."/>
            <person name="Davenport L.B."/>
            <person name="Davies P."/>
            <person name="de Pablos B."/>
            <person name="Delcher A."/>
            <person name="Deng Z."/>
            <person name="Mays A.D."/>
            <person name="Dew I."/>
            <person name="Dietz S.M."/>
            <person name="Dodson K."/>
            <person name="Doup L.E."/>
            <person name="Downes M."/>
            <person name="Dugan-Rocha S."/>
            <person name="Dunkov B.C."/>
            <person name="Dunn P."/>
            <person name="Durbin K.J."/>
            <person name="Evangelista C.C."/>
            <person name="Ferraz C."/>
            <person name="Ferriera S."/>
            <person name="Fleischmann W."/>
            <person name="Fosler C."/>
            <person name="Gabrielian A.E."/>
            <person name="Garg N.S."/>
            <person name="Gelbart W.M."/>
            <person name="Glasser K."/>
            <person name="Glodek A."/>
            <person name="Gong F."/>
            <person name="Gorrell J.H."/>
            <person name="Gu Z."/>
            <person name="Guan P."/>
            <person name="Harris M."/>
            <person name="Harris N.L."/>
            <person name="Harvey D.A."/>
            <person name="Heiman T.J."/>
            <person name="Hernandez J.R."/>
            <person name="Houck J."/>
            <person name="Hostin D."/>
            <person name="Houston K.A."/>
            <person name="Howland T.J."/>
            <person name="Wei M.-H."/>
            <person name="Ibegwam C."/>
            <person name="Jalali M."/>
            <person name="Kalush F."/>
            <person name="Karpen G.H."/>
            <person name="Ke Z."/>
            <person name="Kennison J.A."/>
            <person name="Ketchum K.A."/>
            <person name="Kimmel B.E."/>
            <person name="Kodira C.D."/>
            <person name="Kraft C.L."/>
            <person name="Kravitz S."/>
            <person name="Kulp D."/>
            <person name="Lai Z."/>
            <person name="Lasko P."/>
            <person name="Lei Y."/>
            <person name="Levitsky A.A."/>
            <person name="Li J.H."/>
            <person name="Li Z."/>
            <person name="Liang Y."/>
            <person name="Lin X."/>
            <person name="Liu X."/>
            <person name="Mattei B."/>
            <person name="McIntosh T.C."/>
            <person name="McLeod M.P."/>
            <person name="McPherson D."/>
            <person name="Merkulov G."/>
            <person name="Milshina N.V."/>
            <person name="Mobarry C."/>
            <person name="Morris J."/>
            <person name="Moshrefi A."/>
            <person name="Mount S.M."/>
            <person name="Moy M."/>
            <person name="Murphy B."/>
            <person name="Murphy L."/>
            <person name="Muzny D.M."/>
            <person name="Nelson D.L."/>
            <person name="Nelson D.R."/>
            <person name="Nelson K.A."/>
            <person name="Nixon K."/>
            <person name="Nusskern D.R."/>
            <person name="Pacleb J.M."/>
            <person name="Palazzolo M."/>
            <person name="Pittman G.S."/>
            <person name="Pan S."/>
            <person name="Pollard J."/>
            <person name="Puri V."/>
            <person name="Reese M.G."/>
            <person name="Reinert K."/>
            <person name="Remington K."/>
            <person name="Saunders R.D.C."/>
            <person name="Scheeler F."/>
            <person name="Shen H."/>
            <person name="Shue B.C."/>
            <person name="Siden-Kiamos I."/>
            <person name="Simpson M."/>
            <person name="Skupski M.P."/>
            <person name="Smith T.J."/>
            <person name="Spier E."/>
            <person name="Spradling A.C."/>
            <person name="Stapleton M."/>
            <person name="Strong R."/>
            <person name="Sun E."/>
            <person name="Svirskas R."/>
            <person name="Tector C."/>
            <person name="Turner R."/>
            <person name="Venter E."/>
            <person name="Wang A.H."/>
            <person name="Wang X."/>
            <person name="Wang Z.-Y."/>
            <person name="Wassarman D.A."/>
            <person name="Weinstock G.M."/>
            <person name="Weissenbach J."/>
            <person name="Williams S.M."/>
            <person name="Woodage T."/>
            <person name="Worley K.C."/>
            <person name="Wu D."/>
            <person name="Yang S."/>
            <person name="Yao Q.A."/>
            <person name="Ye J."/>
            <person name="Yeh R.-F."/>
            <person name="Zaveri J.S."/>
            <person name="Zhan M."/>
            <person name="Zhang G."/>
            <person name="Zhao Q."/>
            <person name="Zheng L."/>
            <person name="Zheng X.H."/>
            <person name="Zhong F.N."/>
            <person name="Zhong W."/>
            <person name="Zhou X."/>
            <person name="Zhu S.C."/>
            <person name="Zhu X."/>
            <person name="Smith H.O."/>
            <person name="Gibbs R.A."/>
            <person name="Myers E.W."/>
            <person name="Rubin G.M."/>
            <person name="Venter J.C."/>
        </authorList>
    </citation>
    <scope>NUCLEOTIDE SEQUENCE [LARGE SCALE GENOMIC DNA]</scope>
    <source>
        <strain>Berkeley</strain>
    </source>
</reference>
<reference key="4">
    <citation type="journal article" date="2002" name="Genome Biol.">
        <title>Annotation of the Drosophila melanogaster euchromatic genome: a systematic review.</title>
        <authorList>
            <person name="Misra S."/>
            <person name="Crosby M.A."/>
            <person name="Mungall C.J."/>
            <person name="Matthews B.B."/>
            <person name="Campbell K.S."/>
            <person name="Hradecky P."/>
            <person name="Huang Y."/>
            <person name="Kaminker J.S."/>
            <person name="Millburn G.H."/>
            <person name="Prochnik S.E."/>
            <person name="Smith C.D."/>
            <person name="Tupy J.L."/>
            <person name="Whitfield E.J."/>
            <person name="Bayraktaroglu L."/>
            <person name="Berman B.P."/>
            <person name="Bettencourt B.R."/>
            <person name="Celniker S.E."/>
            <person name="de Grey A.D.N.J."/>
            <person name="Drysdale R.A."/>
            <person name="Harris N.L."/>
            <person name="Richter J."/>
            <person name="Russo S."/>
            <person name="Schroeder A.J."/>
            <person name="Shu S.Q."/>
            <person name="Stapleton M."/>
            <person name="Yamada C."/>
            <person name="Ashburner M."/>
            <person name="Gelbart W.M."/>
            <person name="Rubin G.M."/>
            <person name="Lewis S.E."/>
        </authorList>
    </citation>
    <scope>GENOME REANNOTATION</scope>
    <source>
        <strain>Berkeley</strain>
    </source>
</reference>
<reference key="5">
    <citation type="journal article" date="2002" name="Genome Biol.">
        <title>A Drosophila full-length cDNA resource.</title>
        <authorList>
            <person name="Stapleton M."/>
            <person name="Carlson J.W."/>
            <person name="Brokstein P."/>
            <person name="Yu C."/>
            <person name="Champe M."/>
            <person name="George R.A."/>
            <person name="Guarin H."/>
            <person name="Kronmiller B."/>
            <person name="Pacleb J.M."/>
            <person name="Park S."/>
            <person name="Wan K.H."/>
            <person name="Rubin G.M."/>
            <person name="Celniker S.E."/>
        </authorList>
    </citation>
    <scope>NUCLEOTIDE SEQUENCE [LARGE SCALE MRNA]</scope>
    <source>
        <strain>Berkeley</strain>
        <tissue>Embryo</tissue>
    </source>
</reference>
<reference key="6">
    <citation type="journal article" date="2001" name="Mol. Cell. Biol.">
        <title>Interaction between the Drosophila CAF-1 and ASF1 chromatin assembly factors.</title>
        <authorList>
            <person name="Tyler J.K."/>
            <person name="Collins K.A."/>
            <person name="Prasad-Sinha J."/>
            <person name="Amiott E."/>
            <person name="Bulger M."/>
            <person name="Harte P.J."/>
            <person name="Kobayashi R."/>
            <person name="Kadonaga J.T."/>
        </authorList>
    </citation>
    <scope>FUNCTION</scope>
    <scope>INTERACTION WITH CAF1-105</scope>
    <scope>SUBCELLULAR LOCATION</scope>
</reference>
<reference key="7">
    <citation type="journal article" date="2002" name="Genes Dev.">
        <title>Histone chaperone ASF1 cooperates with the Brahma chromatin-remodelling machinery.</title>
        <authorList>
            <person name="Moshkin Y.M."/>
            <person name="Armstrong J.A."/>
            <person name="Maeda R.K."/>
            <person name="Tamkun J.W."/>
            <person name="Verrijzer P."/>
            <person name="Kennison J.A."/>
            <person name="Karch F."/>
        </authorList>
    </citation>
    <scope>FUNCTION</scope>
    <scope>INTERACTION WITH BRM AND MOR</scope>
    <scope>SUBCELLULAR LOCATION</scope>
    <scope>MUTAGENESIS OF 19-PHE--LEU-26</scope>
</reference>
<reference key="8">
    <citation type="journal article" date="2003" name="Genes Dev.">
        <title>Tousled-like kinase functions with the chromatin assembly pathway regulating nuclear divisions.</title>
        <authorList>
            <person name="Carrera P."/>
            <person name="Moshkin Y.M."/>
            <person name="Groenke S."/>
            <person name="Sillje H.H.W."/>
            <person name="Nigg E.A."/>
            <person name="Jaeckle H."/>
            <person name="Karch F."/>
        </authorList>
    </citation>
    <scope>FUNCTION</scope>
    <scope>INTERACTION WITH TLK</scope>
    <scope>PHOSPHORYLATION BY TLK</scope>
</reference>
<reference key="9">
    <citation type="journal article" date="2005" name="Eukaryot. Cell">
        <title>Functional conservation and specialization among eukaryotic anti-silencing function 1 histone chaperones.</title>
        <authorList>
            <person name="Tamburini B.A."/>
            <person name="Carson J.J."/>
            <person name="Adkins M.W."/>
            <person name="Tyler J.K."/>
        </authorList>
    </citation>
    <scope>FUNCTION</scope>
</reference>
<reference key="10">
    <citation type="journal article" date="2006" name="FASEB J.">
        <title>The histone chaperone ASF1 localizes to active DNA replication forks to mediate efficient DNA replication.</title>
        <authorList>
            <person name="Schulz L.L."/>
            <person name="Tyler J.K."/>
        </authorList>
    </citation>
    <scope>FUNCTION</scope>
    <scope>SUBCELLULAR LOCATION</scope>
</reference>
<reference key="11">
    <citation type="journal article" date="2008" name="J. Proteome Res.">
        <title>Phosphoproteome analysis of Drosophila melanogaster embryos.</title>
        <authorList>
            <person name="Zhai B."/>
            <person name="Villen J."/>
            <person name="Beausoleil S.A."/>
            <person name="Mintseris J."/>
            <person name="Gygi S.P."/>
        </authorList>
    </citation>
    <scope>PHOSPHORYLATION [LARGE SCALE ANALYSIS] AT SER-211 AND SER-213</scope>
    <scope>IDENTIFICATION BY MASS SPECTROMETRY</scope>
    <source>
        <tissue>Embryo</tissue>
    </source>
</reference>
<reference key="12">
    <citation type="journal article" date="2017" name="Mol. Cell. Biol.">
        <title>The Drosophila DAXX-Like Protein (DLP) Cooperates with ASF1 for H3.3 Deposition and Heterochromatin Formation.</title>
        <authorList>
            <person name="Fromental-Ramain C."/>
            <person name="Ramain P."/>
            <person name="Hamiche A."/>
        </authorList>
    </citation>
    <scope>FUNCTION</scope>
    <scope>INTERACTION WITH DAXX</scope>
</reference>
<protein>
    <recommendedName>
        <fullName>Histone chaperone asf1</fullName>
    </recommendedName>
    <alternativeName>
        <fullName>Anti-silencing function protein 1</fullName>
    </alternativeName>
    <alternativeName>
        <fullName>Replication-coupling assembly factor subunit ASF1</fullName>
        <shortName>RCAF subunit ASF1</shortName>
    </alternativeName>
    <alternativeName>
        <fullName>dASF1</fullName>
    </alternativeName>
</protein>
<gene>
    <name type="primary">asf1</name>
    <name type="ORF">CG9383</name>
</gene>
<organism>
    <name type="scientific">Drosophila melanogaster</name>
    <name type="common">Fruit fly</name>
    <dbReference type="NCBI Taxonomy" id="7227"/>
    <lineage>
        <taxon>Eukaryota</taxon>
        <taxon>Metazoa</taxon>
        <taxon>Ecdysozoa</taxon>
        <taxon>Arthropoda</taxon>
        <taxon>Hexapoda</taxon>
        <taxon>Insecta</taxon>
        <taxon>Pterygota</taxon>
        <taxon>Neoptera</taxon>
        <taxon>Endopterygota</taxon>
        <taxon>Diptera</taxon>
        <taxon>Brachycera</taxon>
        <taxon>Muscomorpha</taxon>
        <taxon>Ephydroidea</taxon>
        <taxon>Drosophilidae</taxon>
        <taxon>Drosophila</taxon>
        <taxon>Sophophora</taxon>
    </lineage>
</organism>
<proteinExistence type="evidence at protein level"/>
<comment type="function">
    <text evidence="1 2 3 4 5 6 8">Histone chaperone that facilitates histone deposition and histone exchange and removal during nucleosome assembly and disassembly (PubMed:10591219, PubMed:12381660, PubMed:14561777, PubMed:16151251, PubMed:16396992). Cooperates with chromatin assembly factor 1 (CAF-1) to promote replication-dependent chromatin assembly (PubMed:11533245). Plays a role in the formation of silent heterochromatin (PubMed:12381660, PubMed:28320872).</text>
</comment>
<comment type="subunit">
    <text evidence="1 2 3 4 8">Component of the replication coupling assembly factor (RCAF), composed of asf1, histone H3 and histone H4 (PubMed:10591219). Interacts with the Caf1-105 subunit of the CAF-1 complex (PubMed:11533245). Interacts with brm, mor and tlk (PubMed:12381660, PubMed:14561777). Interacts with Daxx (PubMed:28320872).</text>
</comment>
<comment type="subcellular location">
    <subcellularLocation>
        <location evidence="3">Nucleus</location>
    </subcellularLocation>
    <subcellularLocation>
        <location evidence="2 3 6">Chromosome</location>
    </subcellularLocation>
    <text evidence="3 6">Localizes to multiple sites on polytene chromosomes including transcriptionally active developmental puffs, the chromocenter and the histone gene cluster (PubMed:12381660). Localizes to active foci of DNA replication throughout S-phase and is lost from stalled replication forks (PubMed:16396992). Not detected on condensed chromatin during mitosis (PubMed:16396992).</text>
</comment>
<comment type="developmental stage">
    <text evidence="1">Highly expressed in embryos and at lower levels in larvae, pupae and adults.</text>
</comment>
<comment type="PTM">
    <text evidence="4 7">Phosphorylated on undefined residues by tlk.</text>
</comment>
<comment type="similarity">
    <text evidence="9">Belongs to the ASF1 family.</text>
</comment>